<keyword id="KW-0488">Methylation</keyword>
<keyword id="KW-0687">Ribonucleoprotein</keyword>
<keyword id="KW-0689">Ribosomal protein</keyword>
<keyword id="KW-0694">RNA-binding</keyword>
<keyword id="KW-0699">rRNA-binding</keyword>
<comment type="function">
    <text evidence="1">Forms part of the ribosomal stalk which helps the ribosome interact with GTP-bound translation factors.</text>
</comment>
<comment type="subunit">
    <text evidence="1">Part of the ribosomal stalk of the 50S ribosomal subunit. Interacts with L10 and the large rRNA to form the base of the stalk. L10 forms an elongated spine to which L12 dimers bind in a sequential fashion forming a multimeric L10(L12)X complex.</text>
</comment>
<comment type="PTM">
    <text evidence="1">One or more lysine residues are methylated.</text>
</comment>
<comment type="similarity">
    <text evidence="1">Belongs to the universal ribosomal protein uL11 family.</text>
</comment>
<protein>
    <recommendedName>
        <fullName evidence="1">Large ribosomal subunit protein uL11</fullName>
    </recommendedName>
    <alternativeName>
        <fullName evidence="2">50S ribosomal protein L11</fullName>
    </alternativeName>
</protein>
<sequence length="143" mass="14822">MAKKIIGFIKLQIPAGKANPSPPVGPALGQRGLNIMEFCKAFNAQTQGMEPGLPVPVVITAFADKSFTFVMKSPPATVLIKKAAGITKGSPKPHTDKVGKITRAQAEEIAKAKNADLTAADLDAAVRTIAGSARSMGITVEGL</sequence>
<reference key="1">
    <citation type="journal article" date="2008" name="Genome Res.">
        <title>Genome sequence of the beta-rhizobium Cupriavidus taiwanensis and comparative genomics of rhizobia.</title>
        <authorList>
            <person name="Amadou C."/>
            <person name="Pascal G."/>
            <person name="Mangenot S."/>
            <person name="Glew M."/>
            <person name="Bontemps C."/>
            <person name="Capela D."/>
            <person name="Carrere S."/>
            <person name="Cruveiller S."/>
            <person name="Dossat C."/>
            <person name="Lajus A."/>
            <person name="Marchetti M."/>
            <person name="Poinsot V."/>
            <person name="Rouy Z."/>
            <person name="Servin B."/>
            <person name="Saad M."/>
            <person name="Schenowitz C."/>
            <person name="Barbe V."/>
            <person name="Batut J."/>
            <person name="Medigue C."/>
            <person name="Masson-Boivin C."/>
        </authorList>
    </citation>
    <scope>NUCLEOTIDE SEQUENCE [LARGE SCALE GENOMIC DNA]</scope>
    <source>
        <strain>DSM 17343 / BCRC 17206 / CCUG 44338 / CIP 107171 / LMG 19424 / R1</strain>
    </source>
</reference>
<feature type="chain" id="PRO_1000195611" description="Large ribosomal subunit protein uL11">
    <location>
        <begin position="1"/>
        <end position="143"/>
    </location>
</feature>
<accession>B3R7U0</accession>
<proteinExistence type="inferred from homology"/>
<evidence type="ECO:0000255" key="1">
    <source>
        <dbReference type="HAMAP-Rule" id="MF_00736"/>
    </source>
</evidence>
<evidence type="ECO:0000305" key="2"/>
<name>RL11_CUPTR</name>
<organism>
    <name type="scientific">Cupriavidus taiwanensis (strain DSM 17343 / BCRC 17206 / CCUG 44338 / CIP 107171 / LMG 19424 / R1)</name>
    <name type="common">Ralstonia taiwanensis (strain LMG 19424)</name>
    <dbReference type="NCBI Taxonomy" id="977880"/>
    <lineage>
        <taxon>Bacteria</taxon>
        <taxon>Pseudomonadati</taxon>
        <taxon>Pseudomonadota</taxon>
        <taxon>Betaproteobacteria</taxon>
        <taxon>Burkholderiales</taxon>
        <taxon>Burkholderiaceae</taxon>
        <taxon>Cupriavidus</taxon>
    </lineage>
</organism>
<gene>
    <name evidence="1" type="primary">rplK</name>
    <name type="ordered locus">RALTA_A2963</name>
</gene>
<dbReference type="EMBL" id="CU633749">
    <property type="protein sequence ID" value="CAQ70885.1"/>
    <property type="molecule type" value="Genomic_DNA"/>
</dbReference>
<dbReference type="RefSeq" id="WP_010810467.1">
    <property type="nucleotide sequence ID" value="NC_010528.1"/>
</dbReference>
<dbReference type="SMR" id="B3R7U0"/>
<dbReference type="GeneID" id="29760665"/>
<dbReference type="KEGG" id="cti:RALTA_A2963"/>
<dbReference type="eggNOG" id="COG0080">
    <property type="taxonomic scope" value="Bacteria"/>
</dbReference>
<dbReference type="HOGENOM" id="CLU_074237_2_0_4"/>
<dbReference type="BioCyc" id="CTAI977880:RALTA_RS14440-MONOMER"/>
<dbReference type="Proteomes" id="UP000001692">
    <property type="component" value="Chromosome 1"/>
</dbReference>
<dbReference type="GO" id="GO:0022625">
    <property type="term" value="C:cytosolic large ribosomal subunit"/>
    <property type="evidence" value="ECO:0007669"/>
    <property type="project" value="TreeGrafter"/>
</dbReference>
<dbReference type="GO" id="GO:0070180">
    <property type="term" value="F:large ribosomal subunit rRNA binding"/>
    <property type="evidence" value="ECO:0007669"/>
    <property type="project" value="UniProtKB-UniRule"/>
</dbReference>
<dbReference type="GO" id="GO:0003735">
    <property type="term" value="F:structural constituent of ribosome"/>
    <property type="evidence" value="ECO:0007669"/>
    <property type="project" value="InterPro"/>
</dbReference>
<dbReference type="GO" id="GO:0006412">
    <property type="term" value="P:translation"/>
    <property type="evidence" value="ECO:0007669"/>
    <property type="project" value="UniProtKB-UniRule"/>
</dbReference>
<dbReference type="CDD" id="cd00349">
    <property type="entry name" value="Ribosomal_L11"/>
    <property type="match status" value="1"/>
</dbReference>
<dbReference type="FunFam" id="1.10.10.250:FF:000001">
    <property type="entry name" value="50S ribosomal protein L11"/>
    <property type="match status" value="1"/>
</dbReference>
<dbReference type="FunFam" id="3.30.1550.10:FF:000001">
    <property type="entry name" value="50S ribosomal protein L11"/>
    <property type="match status" value="1"/>
</dbReference>
<dbReference type="Gene3D" id="1.10.10.250">
    <property type="entry name" value="Ribosomal protein L11, C-terminal domain"/>
    <property type="match status" value="1"/>
</dbReference>
<dbReference type="Gene3D" id="3.30.1550.10">
    <property type="entry name" value="Ribosomal protein L11/L12, N-terminal domain"/>
    <property type="match status" value="1"/>
</dbReference>
<dbReference type="HAMAP" id="MF_00736">
    <property type="entry name" value="Ribosomal_uL11"/>
    <property type="match status" value="1"/>
</dbReference>
<dbReference type="InterPro" id="IPR000911">
    <property type="entry name" value="Ribosomal_uL11"/>
</dbReference>
<dbReference type="InterPro" id="IPR006519">
    <property type="entry name" value="Ribosomal_uL11_bac-typ"/>
</dbReference>
<dbReference type="InterPro" id="IPR020783">
    <property type="entry name" value="Ribosomal_uL11_C"/>
</dbReference>
<dbReference type="InterPro" id="IPR036769">
    <property type="entry name" value="Ribosomal_uL11_C_sf"/>
</dbReference>
<dbReference type="InterPro" id="IPR020785">
    <property type="entry name" value="Ribosomal_uL11_CS"/>
</dbReference>
<dbReference type="InterPro" id="IPR020784">
    <property type="entry name" value="Ribosomal_uL11_N"/>
</dbReference>
<dbReference type="InterPro" id="IPR036796">
    <property type="entry name" value="Ribosomal_uL11_N_sf"/>
</dbReference>
<dbReference type="NCBIfam" id="TIGR01632">
    <property type="entry name" value="L11_bact"/>
    <property type="match status" value="1"/>
</dbReference>
<dbReference type="PANTHER" id="PTHR11661">
    <property type="entry name" value="60S RIBOSOMAL PROTEIN L12"/>
    <property type="match status" value="1"/>
</dbReference>
<dbReference type="PANTHER" id="PTHR11661:SF1">
    <property type="entry name" value="LARGE RIBOSOMAL SUBUNIT PROTEIN UL11M"/>
    <property type="match status" value="1"/>
</dbReference>
<dbReference type="Pfam" id="PF00298">
    <property type="entry name" value="Ribosomal_L11"/>
    <property type="match status" value="1"/>
</dbReference>
<dbReference type="Pfam" id="PF03946">
    <property type="entry name" value="Ribosomal_L11_N"/>
    <property type="match status" value="1"/>
</dbReference>
<dbReference type="SMART" id="SM00649">
    <property type="entry name" value="RL11"/>
    <property type="match status" value="1"/>
</dbReference>
<dbReference type="SUPFAM" id="SSF54747">
    <property type="entry name" value="Ribosomal L11/L12e N-terminal domain"/>
    <property type="match status" value="1"/>
</dbReference>
<dbReference type="SUPFAM" id="SSF46906">
    <property type="entry name" value="Ribosomal protein L11, C-terminal domain"/>
    <property type="match status" value="1"/>
</dbReference>
<dbReference type="PROSITE" id="PS00359">
    <property type="entry name" value="RIBOSOMAL_L11"/>
    <property type="match status" value="1"/>
</dbReference>